<organism>
    <name type="scientific">Dictyostelium discoideum</name>
    <name type="common">Social amoeba</name>
    <dbReference type="NCBI Taxonomy" id="44689"/>
    <lineage>
        <taxon>Eukaryota</taxon>
        <taxon>Amoebozoa</taxon>
        <taxon>Evosea</taxon>
        <taxon>Eumycetozoa</taxon>
        <taxon>Dictyostelia</taxon>
        <taxon>Dictyosteliales</taxon>
        <taxon>Dictyosteliaceae</taxon>
        <taxon>Dictyostelium</taxon>
    </lineage>
</organism>
<accession>Q54L43</accession>
<protein>
    <recommendedName>
        <fullName>Putative uncharacterized protein DDB_G0286915</fullName>
    </recommendedName>
</protein>
<gene>
    <name type="ORF">DDB_G0286915</name>
</gene>
<dbReference type="EMBL" id="AAFI02000092">
    <property type="protein sequence ID" value="EAL63955.1"/>
    <property type="molecule type" value="Genomic_DNA"/>
</dbReference>
<dbReference type="RefSeq" id="XP_637460.1">
    <property type="nucleotide sequence ID" value="XM_632368.1"/>
</dbReference>
<dbReference type="PaxDb" id="44689-DDB0187187"/>
<dbReference type="EnsemblProtists" id="EAL63955">
    <property type="protein sequence ID" value="EAL63955"/>
    <property type="gene ID" value="DDB_G0286915"/>
</dbReference>
<dbReference type="GeneID" id="8625859"/>
<dbReference type="KEGG" id="ddi:DDB_G0286915"/>
<dbReference type="dictyBase" id="DDB_G0286915"/>
<dbReference type="HOGENOM" id="CLU_2627125_0_0_1"/>
<dbReference type="InParanoid" id="Q54L43"/>
<dbReference type="PRO" id="PR:Q54L43"/>
<dbReference type="Proteomes" id="UP000002195">
    <property type="component" value="Chromosome 4"/>
</dbReference>
<evidence type="ECO:0000256" key="1">
    <source>
        <dbReference type="SAM" id="MobiDB-lite"/>
    </source>
</evidence>
<keyword id="KW-1185">Reference proteome</keyword>
<reference key="1">
    <citation type="journal article" date="2005" name="Nature">
        <title>The genome of the social amoeba Dictyostelium discoideum.</title>
        <authorList>
            <person name="Eichinger L."/>
            <person name="Pachebat J.A."/>
            <person name="Gloeckner G."/>
            <person name="Rajandream M.A."/>
            <person name="Sucgang R."/>
            <person name="Berriman M."/>
            <person name="Song J."/>
            <person name="Olsen R."/>
            <person name="Szafranski K."/>
            <person name="Xu Q."/>
            <person name="Tunggal B."/>
            <person name="Kummerfeld S."/>
            <person name="Madera M."/>
            <person name="Konfortov B.A."/>
            <person name="Rivero F."/>
            <person name="Bankier A.T."/>
            <person name="Lehmann R."/>
            <person name="Hamlin N."/>
            <person name="Davies R."/>
            <person name="Gaudet P."/>
            <person name="Fey P."/>
            <person name="Pilcher K."/>
            <person name="Chen G."/>
            <person name="Saunders D."/>
            <person name="Sodergren E.J."/>
            <person name="Davis P."/>
            <person name="Kerhornou A."/>
            <person name="Nie X."/>
            <person name="Hall N."/>
            <person name="Anjard C."/>
            <person name="Hemphill L."/>
            <person name="Bason N."/>
            <person name="Farbrother P."/>
            <person name="Desany B."/>
            <person name="Just E."/>
            <person name="Morio T."/>
            <person name="Rost R."/>
            <person name="Churcher C.M."/>
            <person name="Cooper J."/>
            <person name="Haydock S."/>
            <person name="van Driessche N."/>
            <person name="Cronin A."/>
            <person name="Goodhead I."/>
            <person name="Muzny D.M."/>
            <person name="Mourier T."/>
            <person name="Pain A."/>
            <person name="Lu M."/>
            <person name="Harper D."/>
            <person name="Lindsay R."/>
            <person name="Hauser H."/>
            <person name="James K.D."/>
            <person name="Quiles M."/>
            <person name="Madan Babu M."/>
            <person name="Saito T."/>
            <person name="Buchrieser C."/>
            <person name="Wardroper A."/>
            <person name="Felder M."/>
            <person name="Thangavelu M."/>
            <person name="Johnson D."/>
            <person name="Knights A."/>
            <person name="Loulseged H."/>
            <person name="Mungall K.L."/>
            <person name="Oliver K."/>
            <person name="Price C."/>
            <person name="Quail M.A."/>
            <person name="Urushihara H."/>
            <person name="Hernandez J."/>
            <person name="Rabbinowitsch E."/>
            <person name="Steffen D."/>
            <person name="Sanders M."/>
            <person name="Ma J."/>
            <person name="Kohara Y."/>
            <person name="Sharp S."/>
            <person name="Simmonds M.N."/>
            <person name="Spiegler S."/>
            <person name="Tivey A."/>
            <person name="Sugano S."/>
            <person name="White B."/>
            <person name="Walker D."/>
            <person name="Woodward J.R."/>
            <person name="Winckler T."/>
            <person name="Tanaka Y."/>
            <person name="Shaulsky G."/>
            <person name="Schleicher M."/>
            <person name="Weinstock G.M."/>
            <person name="Rosenthal A."/>
            <person name="Cox E.C."/>
            <person name="Chisholm R.L."/>
            <person name="Gibbs R.A."/>
            <person name="Loomis W.F."/>
            <person name="Platzer M."/>
            <person name="Kay R.R."/>
            <person name="Williams J.G."/>
            <person name="Dear P.H."/>
            <person name="Noegel A.A."/>
            <person name="Barrell B.G."/>
            <person name="Kuspa A."/>
        </authorList>
    </citation>
    <scope>NUCLEOTIDE SEQUENCE [LARGE SCALE GENOMIC DNA]</scope>
    <source>
        <strain>AX4</strain>
    </source>
</reference>
<feature type="chain" id="PRO_0000347047" description="Putative uncharacterized protein DDB_G0286915">
    <location>
        <begin position="1"/>
        <end position="78"/>
    </location>
</feature>
<feature type="region of interest" description="Disordered" evidence="1">
    <location>
        <begin position="51"/>
        <end position="78"/>
    </location>
</feature>
<name>Y7187_DICDI</name>
<proteinExistence type="predicted"/>
<sequence>MTIVYCLTKLSNPSSSLRSSSDVSGNQGVEIDFDSNSISWKKWYSGGGGSGGKWDGGGSGGKWNGGGGSGGGSWKKWN</sequence>